<keyword id="KW-0067">ATP-binding</keyword>
<keyword id="KW-0227">DNA damage</keyword>
<keyword id="KW-0234">DNA repair</keyword>
<keyword id="KW-0238">DNA-binding</keyword>
<keyword id="KW-0269">Exonuclease</keyword>
<keyword id="KW-0347">Helicase</keyword>
<keyword id="KW-0378">Hydrolase</keyword>
<keyword id="KW-0413">Isomerase</keyword>
<keyword id="KW-0540">Nuclease</keyword>
<keyword id="KW-0547">Nucleotide-binding</keyword>
<accession>Q033I1</accession>
<organism>
    <name type="scientific">Lactococcus lactis subsp. cremoris (strain SK11)</name>
    <dbReference type="NCBI Taxonomy" id="272622"/>
    <lineage>
        <taxon>Bacteria</taxon>
        <taxon>Bacillati</taxon>
        <taxon>Bacillota</taxon>
        <taxon>Bacilli</taxon>
        <taxon>Lactobacillales</taxon>
        <taxon>Streptococcaceae</taxon>
        <taxon>Lactococcus</taxon>
        <taxon>Lactococcus cremoris subsp. cremoris</taxon>
    </lineage>
</organism>
<name>ADDA_LACLS</name>
<evidence type="ECO:0000255" key="1">
    <source>
        <dbReference type="HAMAP-Rule" id="MF_01451"/>
    </source>
</evidence>
<feature type="chain" id="PRO_0000379291" description="ATP-dependent helicase/nuclease subunit A">
    <location>
        <begin position="1"/>
        <end position="1203"/>
    </location>
</feature>
<feature type="domain" description="UvrD-like helicase ATP-binding" evidence="1">
    <location>
        <begin position="4"/>
        <end position="472"/>
    </location>
</feature>
<feature type="domain" description="UvrD-like helicase C-terminal" evidence="1">
    <location>
        <begin position="503"/>
        <end position="785"/>
    </location>
</feature>
<feature type="binding site" evidence="1">
    <location>
        <begin position="25"/>
        <end position="32"/>
    </location>
    <ligand>
        <name>ATP</name>
        <dbReference type="ChEBI" id="CHEBI:30616"/>
    </ligand>
</feature>
<protein>
    <recommendedName>
        <fullName evidence="1">ATP-dependent helicase/nuclease subunit A</fullName>
        <ecNumber evidence="1">3.1.-.-</ecNumber>
        <ecNumber evidence="1">5.6.2.4</ecNumber>
    </recommendedName>
    <alternativeName>
        <fullName evidence="1">ATP-dependent helicase/nuclease AddA</fullName>
    </alternativeName>
    <alternativeName>
        <fullName evidence="1">DNA 3'-5' helicase AddA</fullName>
    </alternativeName>
</protein>
<dbReference type="EC" id="3.1.-.-" evidence="1"/>
<dbReference type="EC" id="5.6.2.4" evidence="1"/>
<dbReference type="EMBL" id="CP000425">
    <property type="protein sequence ID" value="ABJ71641.1"/>
    <property type="molecule type" value="Genomic_DNA"/>
</dbReference>
<dbReference type="RefSeq" id="WP_011675081.1">
    <property type="nucleotide sequence ID" value="NC_008527.1"/>
</dbReference>
<dbReference type="SMR" id="Q033I1"/>
<dbReference type="KEGG" id="llc:LACR_0004"/>
<dbReference type="HOGENOM" id="CLU_001114_3_1_9"/>
<dbReference type="Proteomes" id="UP000000240">
    <property type="component" value="Chromosome"/>
</dbReference>
<dbReference type="GO" id="GO:0005829">
    <property type="term" value="C:cytosol"/>
    <property type="evidence" value="ECO:0007669"/>
    <property type="project" value="TreeGrafter"/>
</dbReference>
<dbReference type="GO" id="GO:0033202">
    <property type="term" value="C:DNA helicase complex"/>
    <property type="evidence" value="ECO:0007669"/>
    <property type="project" value="TreeGrafter"/>
</dbReference>
<dbReference type="GO" id="GO:0043138">
    <property type="term" value="F:3'-5' DNA helicase activity"/>
    <property type="evidence" value="ECO:0007669"/>
    <property type="project" value="UniProtKB-UniRule"/>
</dbReference>
<dbReference type="GO" id="GO:0008408">
    <property type="term" value="F:3'-5' exonuclease activity"/>
    <property type="evidence" value="ECO:0007669"/>
    <property type="project" value="UniProtKB-UniRule"/>
</dbReference>
<dbReference type="GO" id="GO:0005524">
    <property type="term" value="F:ATP binding"/>
    <property type="evidence" value="ECO:0007669"/>
    <property type="project" value="UniProtKB-UniRule"/>
</dbReference>
<dbReference type="GO" id="GO:0016887">
    <property type="term" value="F:ATP hydrolysis activity"/>
    <property type="evidence" value="ECO:0007669"/>
    <property type="project" value="RHEA"/>
</dbReference>
<dbReference type="GO" id="GO:0003690">
    <property type="term" value="F:double-stranded DNA binding"/>
    <property type="evidence" value="ECO:0007669"/>
    <property type="project" value="UniProtKB-UniRule"/>
</dbReference>
<dbReference type="GO" id="GO:0000724">
    <property type="term" value="P:double-strand break repair via homologous recombination"/>
    <property type="evidence" value="ECO:0007669"/>
    <property type="project" value="UniProtKB-UniRule"/>
</dbReference>
<dbReference type="CDD" id="cd17932">
    <property type="entry name" value="DEXQc_UvrD"/>
    <property type="match status" value="1"/>
</dbReference>
<dbReference type="Gene3D" id="3.90.320.10">
    <property type="match status" value="1"/>
</dbReference>
<dbReference type="Gene3D" id="3.40.50.300">
    <property type="entry name" value="P-loop containing nucleotide triphosphate hydrolases"/>
    <property type="match status" value="4"/>
</dbReference>
<dbReference type="Gene3D" id="1.10.486.10">
    <property type="entry name" value="PCRA, domain 4"/>
    <property type="match status" value="1"/>
</dbReference>
<dbReference type="HAMAP" id="MF_01451">
    <property type="entry name" value="AddA"/>
    <property type="match status" value="1"/>
</dbReference>
<dbReference type="InterPro" id="IPR014152">
    <property type="entry name" value="AddA"/>
</dbReference>
<dbReference type="InterPro" id="IPR014017">
    <property type="entry name" value="DNA_helicase_UvrD-like_C"/>
</dbReference>
<dbReference type="InterPro" id="IPR000212">
    <property type="entry name" value="DNA_helicase_UvrD/REP"/>
</dbReference>
<dbReference type="InterPro" id="IPR027417">
    <property type="entry name" value="P-loop_NTPase"/>
</dbReference>
<dbReference type="InterPro" id="IPR011604">
    <property type="entry name" value="PDDEXK-like_dom_sf"/>
</dbReference>
<dbReference type="InterPro" id="IPR011335">
    <property type="entry name" value="Restrct_endonuc-II-like"/>
</dbReference>
<dbReference type="InterPro" id="IPR014016">
    <property type="entry name" value="UvrD-like_ATP-bd"/>
</dbReference>
<dbReference type="NCBIfam" id="TIGR02785">
    <property type="entry name" value="addA_Gpos"/>
    <property type="match status" value="1"/>
</dbReference>
<dbReference type="PANTHER" id="PTHR11070:SF48">
    <property type="entry name" value="ATP-DEPENDENT HELICASE_NUCLEASE SUBUNIT A"/>
    <property type="match status" value="1"/>
</dbReference>
<dbReference type="PANTHER" id="PTHR11070">
    <property type="entry name" value="UVRD / RECB / PCRA DNA HELICASE FAMILY MEMBER"/>
    <property type="match status" value="1"/>
</dbReference>
<dbReference type="Pfam" id="PF00580">
    <property type="entry name" value="UvrD-helicase"/>
    <property type="match status" value="1"/>
</dbReference>
<dbReference type="Pfam" id="PF13361">
    <property type="entry name" value="UvrD_C"/>
    <property type="match status" value="1"/>
</dbReference>
<dbReference type="SUPFAM" id="SSF52540">
    <property type="entry name" value="P-loop containing nucleoside triphosphate hydrolases"/>
    <property type="match status" value="1"/>
</dbReference>
<dbReference type="SUPFAM" id="SSF52980">
    <property type="entry name" value="Restriction endonuclease-like"/>
    <property type="match status" value="1"/>
</dbReference>
<dbReference type="PROSITE" id="PS51198">
    <property type="entry name" value="UVRD_HELICASE_ATP_BIND"/>
    <property type="match status" value="1"/>
</dbReference>
<dbReference type="PROSITE" id="PS51217">
    <property type="entry name" value="UVRD_HELICASE_CTER"/>
    <property type="match status" value="1"/>
</dbReference>
<reference key="1">
    <citation type="journal article" date="2006" name="Proc. Natl. Acad. Sci. U.S.A.">
        <title>Comparative genomics of the lactic acid bacteria.</title>
        <authorList>
            <person name="Makarova K.S."/>
            <person name="Slesarev A."/>
            <person name="Wolf Y.I."/>
            <person name="Sorokin A."/>
            <person name="Mirkin B."/>
            <person name="Koonin E.V."/>
            <person name="Pavlov A."/>
            <person name="Pavlova N."/>
            <person name="Karamychev V."/>
            <person name="Polouchine N."/>
            <person name="Shakhova V."/>
            <person name="Grigoriev I."/>
            <person name="Lou Y."/>
            <person name="Rohksar D."/>
            <person name="Lucas S."/>
            <person name="Huang K."/>
            <person name="Goodstein D.M."/>
            <person name="Hawkins T."/>
            <person name="Plengvidhya V."/>
            <person name="Welker D."/>
            <person name="Hughes J."/>
            <person name="Goh Y."/>
            <person name="Benson A."/>
            <person name="Baldwin K."/>
            <person name="Lee J.-H."/>
            <person name="Diaz-Muniz I."/>
            <person name="Dosti B."/>
            <person name="Smeianov V."/>
            <person name="Wechter W."/>
            <person name="Barabote R."/>
            <person name="Lorca G."/>
            <person name="Altermann E."/>
            <person name="Barrangou R."/>
            <person name="Ganesan B."/>
            <person name="Xie Y."/>
            <person name="Rawsthorne H."/>
            <person name="Tamir D."/>
            <person name="Parker C."/>
            <person name="Breidt F."/>
            <person name="Broadbent J.R."/>
            <person name="Hutkins R."/>
            <person name="O'Sullivan D."/>
            <person name="Steele J."/>
            <person name="Unlu G."/>
            <person name="Saier M.H. Jr."/>
            <person name="Klaenhammer T."/>
            <person name="Richardson P."/>
            <person name="Kozyavkin S."/>
            <person name="Weimer B.C."/>
            <person name="Mills D.A."/>
        </authorList>
    </citation>
    <scope>NUCLEOTIDE SEQUENCE [LARGE SCALE GENOMIC DNA]</scope>
    <source>
        <strain>SK11</strain>
    </source>
</reference>
<sequence>MSEVKLTPEQNEAIHSSGKNILVSASAGSGKTFVMAQRIVEKVKQGIEIDRLFISTFTKKAASELRMRLERDLKKARQESSDDEEAHRLTLALHNLSNADIGTMDSFTQKLTKANFNRVNIDPNFRILADQTESDLIRQEVFEQLVESYLSADESLNISKDKFEKLIKNFSKDRNILGFQKVVYTIYRFASATENPISWLENQFLKGFETYKSLTDLSEDFTVNVKENLLTFFELLENSLTNGVIAKKGAGRDKANLILDNKNELLEAISKKDFVTFTALFLSIDTDIRVGSSKDETLSALKKDFSAQKQDLVGSKSKPGELRKFVDKIKHGQLIEKYQKQAFEIASDLQKFIIEFYKTYLERKKNENAFEYSDIAHFAIEILEENPDIRENLREHYDEIMIDEYQDTSHTQERMLELLSNGHNLFMVGDIKQSIYGFRLADPGLFLEKYKSYDQAENPNQLIRLKENFRSRGEVLNFTNDIFKHLMDEKLGEMTYGKEKALVQGNISDYPVEAEKDFYPELLLYKENTSEEEIEDSEVKISDGEIKGAAQEIKKLIESGVEPKDIAILVRSKSNNNKIEDILLSYDIPVILDEGRVDFLKSMEVLIMLDILRAIDNPLYDLSLVAMLRSPLFGFNEDELTRISVQGSRDLRFWDKILLSLKKEGKNPELINLSLEQKLKAFNQKFTEWRKLVNQIPIHRLLWKIYTETYYFDYVGALKNGEMRQANLQALSVRAESYESSGYKGLFKFVRLINKFMEQNNDLASVNIKLPQNAVRVMTFHKSKGLEFDYVFLMNLQSRFNDRDLKEDVILSREHGLGMKYIADLKAEPDVITDFPYALVKMETFPYMVNKDLKQRAALSEEMRVLYVAFTRAKKKLYLVGKIKDTDKKAGLELYDTATLEGKILSDKFRNSSRGFQHWILALQNATKLPMKLNVYTKDELETEKLEFTSQPDFKKLVEESEKFDNIMSFSDEIKEAQKIMNYQYPHQAATELSSIQTPSQVKKRSYEKQLQVGEVQPVSEFVRVKNLDFSDFGSKKITAAEIGSATHSFMQYADFSQADLFSFQATLDEMGFDEKIKNQIDITKILTLFDTEFGKFLSENVDKTVKEAPFSMLRTDEFAKEQYIVRGICDGFVKIADKIILFDYKTDRFTNVSAISEIKERYKDQMNLYSEALQKAYHVNQIDKYLILLGGPRKVFVEKLDD</sequence>
<comment type="function">
    <text evidence="1">The heterodimer acts as both an ATP-dependent DNA helicase and an ATP-dependent, dual-direction single-stranded exonuclease. Recognizes the chi site generating a DNA molecule suitable for the initiation of homologous recombination. The AddA nuclease domain is required for chi fragment generation; this subunit has the helicase and 3' -&gt; 5' nuclease activities.</text>
</comment>
<comment type="catalytic activity">
    <reaction evidence="1">
        <text>Couples ATP hydrolysis with the unwinding of duplex DNA by translocating in the 3'-5' direction.</text>
        <dbReference type="EC" id="5.6.2.4"/>
    </reaction>
</comment>
<comment type="catalytic activity">
    <reaction evidence="1">
        <text>ATP + H2O = ADP + phosphate + H(+)</text>
        <dbReference type="Rhea" id="RHEA:13065"/>
        <dbReference type="ChEBI" id="CHEBI:15377"/>
        <dbReference type="ChEBI" id="CHEBI:15378"/>
        <dbReference type="ChEBI" id="CHEBI:30616"/>
        <dbReference type="ChEBI" id="CHEBI:43474"/>
        <dbReference type="ChEBI" id="CHEBI:456216"/>
        <dbReference type="EC" id="5.6.2.4"/>
    </reaction>
</comment>
<comment type="cofactor">
    <cofactor evidence="1">
        <name>Mg(2+)</name>
        <dbReference type="ChEBI" id="CHEBI:18420"/>
    </cofactor>
</comment>
<comment type="subunit">
    <text evidence="1">Heterodimer of AddA and AddB/RexB.</text>
</comment>
<comment type="similarity">
    <text evidence="1">Belongs to the helicase family. AddA subfamily.</text>
</comment>
<gene>
    <name evidence="1" type="primary">addA</name>
    <name type="ordered locus">LACR_0004</name>
</gene>
<proteinExistence type="inferred from homology"/>